<dbReference type="EMBL" id="Z74161">
    <property type="protein sequence ID" value="CAA98681.1"/>
    <property type="molecule type" value="Genomic_DNA"/>
</dbReference>
<dbReference type="EMBL" id="BK006938">
    <property type="protein sequence ID" value="DAA11747.1"/>
    <property type="molecule type" value="Genomic_DNA"/>
</dbReference>
<dbReference type="PIR" id="S67656">
    <property type="entry name" value="S67656"/>
</dbReference>
<dbReference type="RefSeq" id="NP_010170.1">
    <property type="nucleotide sequence ID" value="NM_001180172.1"/>
</dbReference>
<dbReference type="SMR" id="Q07528"/>
<dbReference type="BioGRID" id="31949">
    <property type="interactions" value="122"/>
</dbReference>
<dbReference type="ComplexPortal" id="CPX-1377">
    <property type="entry name" value="SNX4-ATG20 sorting nexin complex"/>
</dbReference>
<dbReference type="DIP" id="DIP-1593N"/>
<dbReference type="FunCoup" id="Q07528">
    <property type="interactions" value="202"/>
</dbReference>
<dbReference type="IntAct" id="Q07528">
    <property type="interactions" value="14"/>
</dbReference>
<dbReference type="MINT" id="Q07528"/>
<dbReference type="STRING" id="4932.YDL113C"/>
<dbReference type="iPTMnet" id="Q07528"/>
<dbReference type="PaxDb" id="4932-YDL113C"/>
<dbReference type="PeptideAtlas" id="Q07528"/>
<dbReference type="EnsemblFungi" id="YDL113C_mRNA">
    <property type="protein sequence ID" value="YDL113C"/>
    <property type="gene ID" value="YDL113C"/>
</dbReference>
<dbReference type="GeneID" id="851445"/>
<dbReference type="KEGG" id="sce:YDL113C"/>
<dbReference type="AGR" id="SGD:S000002271"/>
<dbReference type="SGD" id="S000002271">
    <property type="gene designation" value="ATG20"/>
</dbReference>
<dbReference type="VEuPathDB" id="FungiDB:YDL113C"/>
<dbReference type="eggNOG" id="KOG2273">
    <property type="taxonomic scope" value="Eukaryota"/>
</dbReference>
<dbReference type="HOGENOM" id="CLU_014456_2_1_1"/>
<dbReference type="InParanoid" id="Q07528"/>
<dbReference type="OMA" id="ICNTDIT"/>
<dbReference type="OrthoDB" id="289314at2759"/>
<dbReference type="BioCyc" id="YEAST:G3O-29513-MONOMER"/>
<dbReference type="BioGRID-ORCS" id="851445">
    <property type="hits" value="3 hits in 10 CRISPR screens"/>
</dbReference>
<dbReference type="PRO" id="PR:Q07528"/>
<dbReference type="Proteomes" id="UP000002311">
    <property type="component" value="Chromosome IV"/>
</dbReference>
<dbReference type="RNAct" id="Q07528">
    <property type="molecule type" value="protein"/>
</dbReference>
<dbReference type="GO" id="GO:0010009">
    <property type="term" value="C:cytoplasmic side of endosome membrane"/>
    <property type="evidence" value="ECO:0000314"/>
    <property type="project" value="ComplexPortal"/>
</dbReference>
<dbReference type="GO" id="GO:0005829">
    <property type="term" value="C:cytosol"/>
    <property type="evidence" value="ECO:0007669"/>
    <property type="project" value="GOC"/>
</dbReference>
<dbReference type="GO" id="GO:0005768">
    <property type="term" value="C:endosome"/>
    <property type="evidence" value="ECO:0000314"/>
    <property type="project" value="SGD"/>
</dbReference>
<dbReference type="GO" id="GO:0000407">
    <property type="term" value="C:phagophore assembly site"/>
    <property type="evidence" value="ECO:0000314"/>
    <property type="project" value="SGD"/>
</dbReference>
<dbReference type="GO" id="GO:0034045">
    <property type="term" value="C:phagophore assembly site membrane"/>
    <property type="evidence" value="ECO:0007669"/>
    <property type="project" value="UniProtKB-SubCell"/>
</dbReference>
<dbReference type="GO" id="GO:0032266">
    <property type="term" value="F:phosphatidylinositol-3-phosphate binding"/>
    <property type="evidence" value="ECO:0000314"/>
    <property type="project" value="SGD"/>
</dbReference>
<dbReference type="GO" id="GO:0000422">
    <property type="term" value="P:autophagy of mitochondrion"/>
    <property type="evidence" value="ECO:0000315"/>
    <property type="project" value="SGD"/>
</dbReference>
<dbReference type="GO" id="GO:0032258">
    <property type="term" value="P:cytoplasm to vacuole targeting by the Cvt pathway"/>
    <property type="evidence" value="ECO:0000315"/>
    <property type="project" value="SGD"/>
</dbReference>
<dbReference type="GO" id="GO:0034498">
    <property type="term" value="P:early endosome to Golgi transport"/>
    <property type="evidence" value="ECO:0000315"/>
    <property type="project" value="SGD"/>
</dbReference>
<dbReference type="GO" id="GO:0006886">
    <property type="term" value="P:intracellular protein transport"/>
    <property type="evidence" value="ECO:0000314"/>
    <property type="project" value="ComplexPortal"/>
</dbReference>
<dbReference type="GO" id="GO:0016236">
    <property type="term" value="P:macroautophagy"/>
    <property type="evidence" value="ECO:0000315"/>
    <property type="project" value="SGD"/>
</dbReference>
<dbReference type="GO" id="GO:0061709">
    <property type="term" value="P:reticulophagy"/>
    <property type="evidence" value="ECO:0000318"/>
    <property type="project" value="GO_Central"/>
</dbReference>
<dbReference type="GO" id="GO:0042147">
    <property type="term" value="P:retrograde transport, endosome to Golgi"/>
    <property type="evidence" value="ECO:0000314"/>
    <property type="project" value="ComplexPortal"/>
</dbReference>
<dbReference type="CDD" id="cd07629">
    <property type="entry name" value="BAR_Atg20p"/>
    <property type="match status" value="1"/>
</dbReference>
<dbReference type="CDD" id="cd06867">
    <property type="entry name" value="PX_SNX41_42"/>
    <property type="match status" value="1"/>
</dbReference>
<dbReference type="DisProt" id="DP01744"/>
<dbReference type="FunFam" id="1.20.1270.60:FF:000106">
    <property type="entry name" value="Atg20p"/>
    <property type="match status" value="1"/>
</dbReference>
<dbReference type="Gene3D" id="1.20.1270.60">
    <property type="entry name" value="Arfaptin homology (AH) domain/BAR domain"/>
    <property type="match status" value="2"/>
</dbReference>
<dbReference type="Gene3D" id="3.30.1520.10">
    <property type="entry name" value="Phox-like domain"/>
    <property type="match status" value="1"/>
</dbReference>
<dbReference type="InterPro" id="IPR027267">
    <property type="entry name" value="AH/BAR_dom_sf"/>
</dbReference>
<dbReference type="InterPro" id="IPR001683">
    <property type="entry name" value="PX_dom"/>
</dbReference>
<dbReference type="InterPro" id="IPR036871">
    <property type="entry name" value="PX_dom_sf"/>
</dbReference>
<dbReference type="InterPro" id="IPR044106">
    <property type="entry name" value="PX_Snx41/Atg20"/>
</dbReference>
<dbReference type="InterPro" id="IPR051079">
    <property type="entry name" value="Sorting_Nexin_Autophagy"/>
</dbReference>
<dbReference type="PANTHER" id="PTHR46979:SF1">
    <property type="entry name" value="AUTOPHAGY-RELATED PROTEIN 20"/>
    <property type="match status" value="1"/>
</dbReference>
<dbReference type="PANTHER" id="PTHR46979">
    <property type="entry name" value="SORTING NEXIN-41"/>
    <property type="match status" value="1"/>
</dbReference>
<dbReference type="Pfam" id="PF00787">
    <property type="entry name" value="PX"/>
    <property type="match status" value="1"/>
</dbReference>
<dbReference type="SMART" id="SM00312">
    <property type="entry name" value="PX"/>
    <property type="match status" value="1"/>
</dbReference>
<dbReference type="SUPFAM" id="SSF64268">
    <property type="entry name" value="PX domain"/>
    <property type="match status" value="1"/>
</dbReference>
<dbReference type="PROSITE" id="PS50195">
    <property type="entry name" value="PX"/>
    <property type="match status" value="1"/>
</dbReference>
<organism>
    <name type="scientific">Saccharomyces cerevisiae (strain ATCC 204508 / S288c)</name>
    <name type="common">Baker's yeast</name>
    <dbReference type="NCBI Taxonomy" id="559292"/>
    <lineage>
        <taxon>Eukaryota</taxon>
        <taxon>Fungi</taxon>
        <taxon>Dikarya</taxon>
        <taxon>Ascomycota</taxon>
        <taxon>Saccharomycotina</taxon>
        <taxon>Saccharomycetes</taxon>
        <taxon>Saccharomycetales</taxon>
        <taxon>Saccharomycetaceae</taxon>
        <taxon>Saccharomyces</taxon>
    </lineage>
</organism>
<proteinExistence type="evidence at protein level"/>
<reference key="1">
    <citation type="journal article" date="1997" name="Nature">
        <title>The nucleotide sequence of Saccharomyces cerevisiae chromosome IV.</title>
        <authorList>
            <person name="Jacq C."/>
            <person name="Alt-Moerbe J."/>
            <person name="Andre B."/>
            <person name="Arnold W."/>
            <person name="Bahr A."/>
            <person name="Ballesta J.P.G."/>
            <person name="Bargues M."/>
            <person name="Baron L."/>
            <person name="Becker A."/>
            <person name="Biteau N."/>
            <person name="Bloecker H."/>
            <person name="Blugeon C."/>
            <person name="Boskovic J."/>
            <person name="Brandt P."/>
            <person name="Brueckner M."/>
            <person name="Buitrago M.J."/>
            <person name="Coster F."/>
            <person name="Delaveau T."/>
            <person name="del Rey F."/>
            <person name="Dujon B."/>
            <person name="Eide L.G."/>
            <person name="Garcia-Cantalejo J.M."/>
            <person name="Goffeau A."/>
            <person name="Gomez-Peris A."/>
            <person name="Granotier C."/>
            <person name="Hanemann V."/>
            <person name="Hankeln T."/>
            <person name="Hoheisel J.D."/>
            <person name="Jaeger W."/>
            <person name="Jimenez A."/>
            <person name="Jonniaux J.-L."/>
            <person name="Kraemer C."/>
            <person name="Kuester H."/>
            <person name="Laamanen P."/>
            <person name="Legros Y."/>
            <person name="Louis E.J."/>
            <person name="Moeller-Rieker S."/>
            <person name="Monnet A."/>
            <person name="Moro M."/>
            <person name="Mueller-Auer S."/>
            <person name="Nussbaumer B."/>
            <person name="Paricio N."/>
            <person name="Paulin L."/>
            <person name="Perea J."/>
            <person name="Perez-Alonso M."/>
            <person name="Perez-Ortin J.E."/>
            <person name="Pohl T.M."/>
            <person name="Prydz H."/>
            <person name="Purnelle B."/>
            <person name="Rasmussen S.W."/>
            <person name="Remacha M.A."/>
            <person name="Revuelta J.L."/>
            <person name="Rieger M."/>
            <person name="Salom D."/>
            <person name="Saluz H.P."/>
            <person name="Saiz J.E."/>
            <person name="Saren A.-M."/>
            <person name="Schaefer M."/>
            <person name="Scharfe M."/>
            <person name="Schmidt E.R."/>
            <person name="Schneider C."/>
            <person name="Scholler P."/>
            <person name="Schwarz S."/>
            <person name="Soler-Mira A."/>
            <person name="Urrestarazu L.A."/>
            <person name="Verhasselt P."/>
            <person name="Vissers S."/>
            <person name="Voet M."/>
            <person name="Volckaert G."/>
            <person name="Wagner G."/>
            <person name="Wambutt R."/>
            <person name="Wedler E."/>
            <person name="Wedler H."/>
            <person name="Woelfl S."/>
            <person name="Harris D.E."/>
            <person name="Bowman S."/>
            <person name="Brown D."/>
            <person name="Churcher C.M."/>
            <person name="Connor R."/>
            <person name="Dedman K."/>
            <person name="Gentles S."/>
            <person name="Hamlin N."/>
            <person name="Hunt S."/>
            <person name="Jones L."/>
            <person name="McDonald S."/>
            <person name="Murphy L.D."/>
            <person name="Niblett D."/>
            <person name="Odell C."/>
            <person name="Oliver K."/>
            <person name="Rajandream M.A."/>
            <person name="Richards C."/>
            <person name="Shore L."/>
            <person name="Walsh S.V."/>
            <person name="Barrell B.G."/>
            <person name="Dietrich F.S."/>
            <person name="Mulligan J.T."/>
            <person name="Allen E."/>
            <person name="Araujo R."/>
            <person name="Aviles E."/>
            <person name="Berno A."/>
            <person name="Carpenter J."/>
            <person name="Chen E."/>
            <person name="Cherry J.M."/>
            <person name="Chung E."/>
            <person name="Duncan M."/>
            <person name="Hunicke-Smith S."/>
            <person name="Hyman R.W."/>
            <person name="Komp C."/>
            <person name="Lashkari D."/>
            <person name="Lew H."/>
            <person name="Lin D."/>
            <person name="Mosedale D."/>
            <person name="Nakahara K."/>
            <person name="Namath A."/>
            <person name="Oefner P."/>
            <person name="Oh C."/>
            <person name="Petel F.X."/>
            <person name="Roberts D."/>
            <person name="Schramm S."/>
            <person name="Schroeder M."/>
            <person name="Shogren T."/>
            <person name="Shroff N."/>
            <person name="Winant A."/>
            <person name="Yelton M.A."/>
            <person name="Botstein D."/>
            <person name="Davis R.W."/>
            <person name="Johnston M."/>
            <person name="Andrews S."/>
            <person name="Brinkman R."/>
            <person name="Cooper J."/>
            <person name="Ding H."/>
            <person name="Du Z."/>
            <person name="Favello A."/>
            <person name="Fulton L."/>
            <person name="Gattung S."/>
            <person name="Greco T."/>
            <person name="Hallsworth K."/>
            <person name="Hawkins J."/>
            <person name="Hillier L.W."/>
            <person name="Jier M."/>
            <person name="Johnson D."/>
            <person name="Johnston L."/>
            <person name="Kirsten J."/>
            <person name="Kucaba T."/>
            <person name="Langston Y."/>
            <person name="Latreille P."/>
            <person name="Le T."/>
            <person name="Mardis E."/>
            <person name="Menezes S."/>
            <person name="Miller N."/>
            <person name="Nhan M."/>
            <person name="Pauley A."/>
            <person name="Peluso D."/>
            <person name="Rifkin L."/>
            <person name="Riles L."/>
            <person name="Taich A."/>
            <person name="Trevaskis E."/>
            <person name="Vignati D."/>
            <person name="Wilcox L."/>
            <person name="Wohldman P."/>
            <person name="Vaudin M."/>
            <person name="Wilson R."/>
            <person name="Waterston R."/>
            <person name="Albermann K."/>
            <person name="Hani J."/>
            <person name="Heumann K."/>
            <person name="Kleine K."/>
            <person name="Mewes H.-W."/>
            <person name="Zollner A."/>
            <person name="Zaccaria P."/>
        </authorList>
    </citation>
    <scope>NUCLEOTIDE SEQUENCE [LARGE SCALE GENOMIC DNA]</scope>
    <source>
        <strain>ATCC 204508 / S288c</strain>
    </source>
</reference>
<reference key="2">
    <citation type="journal article" date="2014" name="G3 (Bethesda)">
        <title>The reference genome sequence of Saccharomyces cerevisiae: Then and now.</title>
        <authorList>
            <person name="Engel S.R."/>
            <person name="Dietrich F.S."/>
            <person name="Fisk D.G."/>
            <person name="Binkley G."/>
            <person name="Balakrishnan R."/>
            <person name="Costanzo M.C."/>
            <person name="Dwight S.S."/>
            <person name="Hitz B.C."/>
            <person name="Karra K."/>
            <person name="Nash R.S."/>
            <person name="Weng S."/>
            <person name="Wong E.D."/>
            <person name="Lloyd P."/>
            <person name="Skrzypek M.S."/>
            <person name="Miyasato S.R."/>
            <person name="Simison M."/>
            <person name="Cherry J.M."/>
        </authorList>
    </citation>
    <scope>GENOME REANNOTATION</scope>
    <source>
        <strain>ATCC 204508 / S288c</strain>
    </source>
</reference>
<reference key="3">
    <citation type="journal article" date="2002" name="J. Biol. Chem.">
        <title>Cooperative binding of the cytoplasm to vacuole targeting pathway proteins, Cvt13 and Cvt20, to phosphatidylinositol 3-phosphate at the pre-autophagosomal structure is required for selective autophagy.</title>
        <authorList>
            <person name="Nice D.C. III"/>
            <person name="Sato T.K."/>
            <person name="Stromhaug P.E."/>
            <person name="Emr S.D."/>
            <person name="Klionsky D.J."/>
        </authorList>
    </citation>
    <scope>FUNCTION</scope>
    <scope>SUBCELLULAR LOCATION</scope>
    <scope>INTERACTION WITH ATG17 AND SNX4</scope>
    <scope>MUTAGENESIS OF TYR-193</scope>
</reference>
<reference key="4">
    <citation type="journal article" date="2003" name="Dev. Cell">
        <title>A unified nomenclature for yeast autophagy-related genes.</title>
        <authorList>
            <person name="Klionsky D.J."/>
            <person name="Cregg J.M."/>
            <person name="Dunn W.A. Jr."/>
            <person name="Emr S.D."/>
            <person name="Sakai Y."/>
            <person name="Sandoval I.V."/>
            <person name="Sibirny A."/>
            <person name="Subramani S."/>
            <person name="Thumm M."/>
            <person name="Veenhuis M."/>
            <person name="Ohsumi Y."/>
        </authorList>
    </citation>
    <scope>NOMENCLATURE</scope>
</reference>
<reference key="5">
    <citation type="journal article" date="2003" name="EMBO J.">
        <title>Retromer and the sorting nexins Snx4/41/42 mediate distinct retrieval pathways from yeast endosomes.</title>
        <authorList>
            <person name="Hettema E.H."/>
            <person name="Lewis M.J."/>
            <person name="Black M.W."/>
            <person name="Pelham H.R.B."/>
        </authorList>
    </citation>
    <scope>FUNCTION</scope>
    <scope>INTERACTION WITH SNX4</scope>
</reference>
<reference key="6">
    <citation type="journal article" date="2003" name="Nature">
        <title>Global analysis of protein localization in budding yeast.</title>
        <authorList>
            <person name="Huh W.-K."/>
            <person name="Falvo J.V."/>
            <person name="Gerke L.C."/>
            <person name="Carroll A.S."/>
            <person name="Howson R.W."/>
            <person name="Weissman J.S."/>
            <person name="O'Shea E.K."/>
        </authorList>
    </citation>
    <scope>SUBCELLULAR LOCATION [LARGE SCALE ANALYSIS]</scope>
</reference>
<reference key="7">
    <citation type="journal article" date="2003" name="Nature">
        <title>Global analysis of protein expression in yeast.</title>
        <authorList>
            <person name="Ghaemmaghami S."/>
            <person name="Huh W.-K."/>
            <person name="Bower K."/>
            <person name="Howson R.W."/>
            <person name="Belle A."/>
            <person name="Dephoure N."/>
            <person name="O'Shea E.K."/>
            <person name="Weissman J.S."/>
        </authorList>
    </citation>
    <scope>LEVEL OF PROTEIN EXPRESSION [LARGE SCALE ANALYSIS]</scope>
</reference>
<reference key="8">
    <citation type="journal article" date="2005" name="Mol. Biol. Cell">
        <title>Atg11 links cargo to the vesicle-forming machinery in the cytoplasm to vacuole targeting pathway.</title>
        <authorList>
            <person name="Yorimitsu T."/>
            <person name="Klionsky D.J."/>
        </authorList>
    </citation>
    <scope>SUBCELLULAR LOCATION</scope>
    <scope>INTERACTION WITH ATG11</scope>
</reference>
<reference key="9">
    <citation type="journal article" date="2005" name="Mol. Biol. Cell">
        <title>Atg17 regulates the magnitude of the autophagic response.</title>
        <authorList>
            <person name="Cheong H."/>
            <person name="Yorimitsu T."/>
            <person name="Reggiori F."/>
            <person name="Legakis J.E."/>
            <person name="Wang C.W."/>
            <person name="Klionsky D.J."/>
        </authorList>
    </citation>
    <scope>FUNCTION</scope>
</reference>
<reference key="10">
    <citation type="journal article" date="2005" name="Traffic">
        <title>A yeast model system for functional analysis of the Niemann-Pick type C protein 1 homolog, Ncr1p.</title>
        <authorList>
            <person name="Berger A.C."/>
            <person name="Hanson P.K."/>
            <person name="Wylie Nichols J."/>
            <person name="Corbett A.H."/>
        </authorList>
    </citation>
    <scope>FUNCTION</scope>
</reference>
<reference key="11">
    <citation type="journal article" date="2006" name="PLoS Biol.">
        <title>Autophagy counterbalances endoplasmic reticulum expansion during the unfolded protein response.</title>
        <authorList>
            <person name="Bernales S."/>
            <person name="McDonald K.L."/>
            <person name="Walter P."/>
        </authorList>
    </citation>
    <scope>FUNCTION</scope>
</reference>
<reference key="12">
    <citation type="journal article" date="2008" name="Mol. Cell. Proteomics">
        <title>A multidimensional chromatography technology for in-depth phosphoproteome analysis.</title>
        <authorList>
            <person name="Albuquerque C.P."/>
            <person name="Smolka M.B."/>
            <person name="Payne S.H."/>
            <person name="Bafna V."/>
            <person name="Eng J."/>
            <person name="Zhou H."/>
        </authorList>
    </citation>
    <scope>IDENTIFICATION BY MASS SPECTROMETRY [LARGE SCALE ANALYSIS]</scope>
</reference>
<reference key="13">
    <citation type="journal article" date="2009" name="Mol. Biol. Cell">
        <title>A genomic screen for yeast mutants defective in selective mitochondria autophagy.</title>
        <authorList>
            <person name="Kanki T."/>
            <person name="Wang K."/>
            <person name="Baba M."/>
            <person name="Bartholomew C.R."/>
            <person name="Lynch-Day M.A."/>
            <person name="Du Z."/>
            <person name="Geng J."/>
            <person name="Mao K."/>
            <person name="Yang Z."/>
            <person name="Yen W.L."/>
            <person name="Klionsky D.J."/>
        </authorList>
    </citation>
    <scope>FUNCTION</scope>
</reference>
<reference key="14">
    <citation type="journal article" date="2009" name="Science">
        <title>Global analysis of Cdk1 substrate phosphorylation sites provides insights into evolution.</title>
        <authorList>
            <person name="Holt L.J."/>
            <person name="Tuch B.B."/>
            <person name="Villen J."/>
            <person name="Johnson A.D."/>
            <person name="Gygi S.P."/>
            <person name="Morgan D.O."/>
        </authorList>
    </citation>
    <scope>PHOSPHORYLATION [LARGE SCALE ANALYSIS] AT SER-361 AND SER-363</scope>
    <scope>IDENTIFICATION BY MASS SPECTROMETRY [LARGE SCALE ANALYSIS]</scope>
</reference>
<reference key="15">
    <citation type="journal article" date="2010" name="Mol. Biol. Cell">
        <title>Membrane delivery to the yeast autophagosome from the Golgi-endosomal system.</title>
        <authorList>
            <person name="Ohashi Y."/>
            <person name="Munro S."/>
        </authorList>
    </citation>
    <scope>FUNCTION</scope>
</reference>
<reference key="16">
    <citation type="journal article" date="2012" name="Proc. Natl. Acad. Sci. U.S.A.">
        <title>N-terminal acetylome analyses and functional insights of the N-terminal acetyltransferase NatB.</title>
        <authorList>
            <person name="Van Damme P."/>
            <person name="Lasa M."/>
            <person name="Polevoda B."/>
            <person name="Gazquez C."/>
            <person name="Elosegui-Artola A."/>
            <person name="Kim D.S."/>
            <person name="De Juan-Pardo E."/>
            <person name="Demeyer K."/>
            <person name="Hole K."/>
            <person name="Larrea E."/>
            <person name="Timmerman E."/>
            <person name="Prieto J."/>
            <person name="Arnesen T."/>
            <person name="Sherman F."/>
            <person name="Gevaert K."/>
            <person name="Aldabe R."/>
        </authorList>
    </citation>
    <scope>ACETYLATION [LARGE SCALE ANALYSIS] AT SER-2</scope>
    <scope>CLEAVAGE OF INITIATOR METHIONINE [LARGE SCALE ANALYSIS]</scope>
    <scope>IDENTIFICATION BY MASS SPECTROMETRY [LARGE SCALE ANALYSIS]</scope>
</reference>
<keyword id="KW-0007">Acetylation</keyword>
<keyword id="KW-0072">Autophagy</keyword>
<keyword id="KW-0175">Coiled coil</keyword>
<keyword id="KW-0967">Endosome</keyword>
<keyword id="KW-0446">Lipid-binding</keyword>
<keyword id="KW-0472">Membrane</keyword>
<keyword id="KW-0597">Phosphoprotein</keyword>
<keyword id="KW-0653">Protein transport</keyword>
<keyword id="KW-1185">Reference proteome</keyword>
<keyword id="KW-0813">Transport</keyword>
<accession>Q07528</accession>
<accession>D6VRN7</accession>
<name>ATG20_YEAST</name>
<feature type="initiator methionine" description="Removed" evidence="15">
    <location>
        <position position="1"/>
    </location>
</feature>
<feature type="chain" id="PRO_0000213824" description="Autophagy-related protein 20">
    <location>
        <begin position="2"/>
        <end position="640"/>
    </location>
</feature>
<feature type="domain" description="PX" evidence="3">
    <location>
        <begin position="140"/>
        <end position="301"/>
    </location>
</feature>
<feature type="region of interest" description="Disordered" evidence="4">
    <location>
        <begin position="1"/>
        <end position="63"/>
    </location>
</feature>
<feature type="region of interest" description="Disordered" evidence="4">
    <location>
        <begin position="126"/>
        <end position="156"/>
    </location>
</feature>
<feature type="coiled-coil region" evidence="2">
    <location>
        <begin position="475"/>
        <end position="512"/>
    </location>
</feature>
<feature type="coiled-coil region" evidence="2">
    <location>
        <begin position="562"/>
        <end position="593"/>
    </location>
</feature>
<feature type="compositionally biased region" description="Polar residues" evidence="4">
    <location>
        <begin position="1"/>
        <end position="18"/>
    </location>
</feature>
<feature type="compositionally biased region" description="Polar residues" evidence="4">
    <location>
        <begin position="126"/>
        <end position="153"/>
    </location>
</feature>
<feature type="binding site" evidence="1">
    <location>
        <position position="192"/>
    </location>
    <ligand>
        <name>a 1,2-diacyl-sn-glycero-3-phospho-(1D-myo-inositol-3-phosphate)</name>
        <dbReference type="ChEBI" id="CHEBI:58088"/>
    </ligand>
</feature>
<feature type="binding site" evidence="1">
    <location>
        <position position="194"/>
    </location>
    <ligand>
        <name>a 1,2-diacyl-sn-glycero-3-phospho-(1D-myo-inositol-3-phosphate)</name>
        <dbReference type="ChEBI" id="CHEBI:58088"/>
    </ligand>
</feature>
<feature type="binding site" evidence="1">
    <location>
        <position position="218"/>
    </location>
    <ligand>
        <name>a 1,2-diacyl-sn-glycero-3-phospho-(1D-myo-inositol-3-phosphate)</name>
        <dbReference type="ChEBI" id="CHEBI:58088"/>
    </ligand>
</feature>
<feature type="binding site" evidence="1">
    <location>
        <position position="267"/>
    </location>
    <ligand>
        <name>a 1,2-diacyl-sn-glycero-3-phospho-(1D-myo-inositol-3-phosphate)</name>
        <dbReference type="ChEBI" id="CHEBI:58088"/>
    </ligand>
</feature>
<feature type="modified residue" description="N-acetylserine" evidence="15">
    <location>
        <position position="2"/>
    </location>
</feature>
<feature type="modified residue" description="Phosphoserine" evidence="14">
    <location>
        <position position="361"/>
    </location>
</feature>
<feature type="modified residue" description="Phosphoserine" evidence="14">
    <location>
        <position position="363"/>
    </location>
</feature>
<feature type="mutagenesis site" description="Abolishes the intracellular punctate localization and decreases the cytoplasm to vacuole transport." evidence="5">
    <original>Y</original>
    <variation>A</variation>
    <location>
        <position position="193"/>
    </location>
</feature>
<comment type="function">
    <text evidence="5 6 8 9 10 11 12">Required for cytoplasm to vacuole transport (Cvt), pexophagy and mitophagy. Also involved in endoplasmic reticulum-specific autophagic process and is essential for the survival of cells subjected to severe ER stress. Functions in protein retrieval from the endocytic pathway. Required for proper sorting of the v-SNARE protein SNC1.</text>
</comment>
<comment type="subunit">
    <text>Forms a complex with SNX4 and ATG17.</text>
</comment>
<comment type="interaction">
    <interactant intactId="EBI-36894">
        <id>Q07528</id>
    </interactant>
    <interactant intactId="EBI-17610">
        <id>P47057</id>
        <label>SNX4</label>
    </interactant>
    <organismsDiffer>false</organismsDiffer>
    <experiments>8</experiments>
</comment>
<comment type="interaction">
    <interactant intactId="EBI-36894">
        <id>Q07528</id>
    </interactant>
    <interactant intactId="EBI-25295">
        <id>P53039</id>
        <label>YIP1</label>
    </interactant>
    <organismsDiffer>false</organismsDiffer>
    <experiments>2</experiments>
</comment>
<comment type="subcellular location">
    <subcellularLocation>
        <location>Endosome membrane</location>
        <topology>Peripheral membrane protein</topology>
    </subcellularLocation>
    <subcellularLocation>
        <location>Preautophagosomal structure membrane</location>
        <topology>Peripheral membrane protein</topology>
    </subcellularLocation>
</comment>
<comment type="domain">
    <text>The PX domain binds phosphatidylinositol 3-phosphate which is necessary for peripheral membrane localization of ATG20 to the perivacuolar punctate structures.</text>
</comment>
<comment type="miscellaneous">
    <text evidence="7">Present with 358 molecules/cell in log phase SD medium.</text>
</comment>
<comment type="similarity">
    <text evidence="13">Belongs to the sorting nexin family.</text>
</comment>
<evidence type="ECO:0000250" key="1"/>
<evidence type="ECO:0000255" key="2"/>
<evidence type="ECO:0000255" key="3">
    <source>
        <dbReference type="PROSITE-ProRule" id="PRU00147"/>
    </source>
</evidence>
<evidence type="ECO:0000256" key="4">
    <source>
        <dbReference type="SAM" id="MobiDB-lite"/>
    </source>
</evidence>
<evidence type="ECO:0000269" key="5">
    <source>
    </source>
</evidence>
<evidence type="ECO:0000269" key="6">
    <source>
    </source>
</evidence>
<evidence type="ECO:0000269" key="7">
    <source>
    </source>
</evidence>
<evidence type="ECO:0000269" key="8">
    <source>
    </source>
</evidence>
<evidence type="ECO:0000269" key="9">
    <source>
    </source>
</evidence>
<evidence type="ECO:0000269" key="10">
    <source>
    </source>
</evidence>
<evidence type="ECO:0000269" key="11">
    <source>
    </source>
</evidence>
<evidence type="ECO:0000269" key="12">
    <source>
    </source>
</evidence>
<evidence type="ECO:0000305" key="13"/>
<evidence type="ECO:0007744" key="14">
    <source>
    </source>
</evidence>
<evidence type="ECO:0007744" key="15">
    <source>
    </source>
</evidence>
<sequence length="640" mass="72546">MSDLNDVQENAKLNSETRNTGKAEPPHGTTEYVAEAEISKNGVGSPKKSPKKGKVGKGDNNKVETELVHTALLEKDNPFMEEGPTGFTKSALLEIPGMRSHNLKNPNEDYEDDSEGLLPLNQESNAETCRTSLSGSINSMNGETSASEEPSVSNRKKSARIHILEAKRVSEGQGRAYIAYVIQFENSTVQRRYSDFESLRSILIRLFPMTLIPPIPEKQSIKNYGKSITGSSSKYLLPSEGSGSVDLSLSVIHASVNNSDEKLIRHRIRMLTEFLNKLLTNEEITKTSIITDFLDPNNHNWHEFVNSSSTFSSLPKSILQCNPLDPTNTTRIHAMLPIPGSSSQLLLNKESNDKKMDKERSKSFTNIEQDYKQYENLLDNGIYKYNRRTTKTYHDLKSDYNEIGEVFAQFAHEQAQVGELAEQLSYLSNAFSGSSISLEKLVGRLYYNINEPLNESVHMATSARELIKYRKLKYLQNEMIKKSLNSKRAQLEKLEAQNNEYKDVDKIIDNEMSKSHTINLERPNNNTGSGGKSYGGKLFNGFNKLASMVKDSVKYQETDPHTASINLKKEIEQLSESLEVTENDLEVISKVIKNDQLPKFSKEREVDLSEILKHYSRYMRNYARQNLEIWKEVKRHQDFA</sequence>
<gene>
    <name type="primary">ATG20</name>
    <name type="synonym">CVT20</name>
    <name type="synonym">SNX42</name>
    <name type="ordered locus">YDL113C</name>
</gene>
<protein>
    <recommendedName>
        <fullName>Autophagy-related protein 20</fullName>
    </recommendedName>
    <alternativeName>
        <fullName>Cytoplasm to vacuole targeting protein 20</fullName>
    </alternativeName>
    <alternativeName>
        <fullName>Sorting nexin-42</fullName>
    </alternativeName>
</protein>